<reference key="1">
    <citation type="journal article" date="2004" name="Proc. Natl. Acad. Sci. U.S.A.">
        <title>Genome sequence of the deep-sea gamma-proteobacterium Idiomarina loihiensis reveals amino acid fermentation as a source of carbon and energy.</title>
        <authorList>
            <person name="Hou S."/>
            <person name="Saw J.H."/>
            <person name="Lee K.S."/>
            <person name="Freitas T.A."/>
            <person name="Belisle C."/>
            <person name="Kawarabayasi Y."/>
            <person name="Donachie S.P."/>
            <person name="Pikina A."/>
            <person name="Galperin M.Y."/>
            <person name="Koonin E.V."/>
            <person name="Makarova K.S."/>
            <person name="Omelchenko M.V."/>
            <person name="Sorokin A."/>
            <person name="Wolf Y.I."/>
            <person name="Li Q.X."/>
            <person name="Keum Y.S."/>
            <person name="Campbell S."/>
            <person name="Denery J."/>
            <person name="Aizawa S."/>
            <person name="Shibata S."/>
            <person name="Malahoff A."/>
            <person name="Alam M."/>
        </authorList>
    </citation>
    <scope>NUCLEOTIDE SEQUENCE [LARGE SCALE GENOMIC DNA]</scope>
    <source>
        <strain>ATCC BAA-735 / DSM 15497 / L2-TR</strain>
    </source>
</reference>
<protein>
    <recommendedName>
        <fullName evidence="1">Lipid-A-disaccharide synthase</fullName>
        <ecNumber evidence="1">2.4.1.182</ecNumber>
    </recommendedName>
</protein>
<name>LPXB_IDILO</name>
<organism>
    <name type="scientific">Idiomarina loihiensis (strain ATCC BAA-735 / DSM 15497 / L2-TR)</name>
    <dbReference type="NCBI Taxonomy" id="283942"/>
    <lineage>
        <taxon>Bacteria</taxon>
        <taxon>Pseudomonadati</taxon>
        <taxon>Pseudomonadota</taxon>
        <taxon>Gammaproteobacteria</taxon>
        <taxon>Alteromonadales</taxon>
        <taxon>Idiomarinaceae</taxon>
        <taxon>Idiomarina</taxon>
    </lineage>
</organism>
<proteinExistence type="inferred from homology"/>
<dbReference type="EC" id="2.4.1.182" evidence="1"/>
<dbReference type="EMBL" id="AE017340">
    <property type="protein sequence ID" value="AAV81672.1"/>
    <property type="molecule type" value="Genomic_DNA"/>
</dbReference>
<dbReference type="RefSeq" id="WP_011234083.1">
    <property type="nucleotide sequence ID" value="NC_006512.1"/>
</dbReference>
<dbReference type="SMR" id="Q5QYW1"/>
<dbReference type="STRING" id="283942.IL0832"/>
<dbReference type="CAZy" id="GT19">
    <property type="family name" value="Glycosyltransferase Family 19"/>
</dbReference>
<dbReference type="GeneID" id="41335988"/>
<dbReference type="KEGG" id="ilo:IL0832"/>
<dbReference type="eggNOG" id="COG0763">
    <property type="taxonomic scope" value="Bacteria"/>
</dbReference>
<dbReference type="HOGENOM" id="CLU_036577_3_0_6"/>
<dbReference type="OrthoDB" id="9801642at2"/>
<dbReference type="UniPathway" id="UPA00973"/>
<dbReference type="Proteomes" id="UP000001171">
    <property type="component" value="Chromosome"/>
</dbReference>
<dbReference type="GO" id="GO:0016020">
    <property type="term" value="C:membrane"/>
    <property type="evidence" value="ECO:0007669"/>
    <property type="project" value="GOC"/>
</dbReference>
<dbReference type="GO" id="GO:0008915">
    <property type="term" value="F:lipid-A-disaccharide synthase activity"/>
    <property type="evidence" value="ECO:0007669"/>
    <property type="project" value="UniProtKB-UniRule"/>
</dbReference>
<dbReference type="GO" id="GO:0005543">
    <property type="term" value="F:phospholipid binding"/>
    <property type="evidence" value="ECO:0007669"/>
    <property type="project" value="TreeGrafter"/>
</dbReference>
<dbReference type="GO" id="GO:0009245">
    <property type="term" value="P:lipid A biosynthetic process"/>
    <property type="evidence" value="ECO:0007669"/>
    <property type="project" value="UniProtKB-UniRule"/>
</dbReference>
<dbReference type="HAMAP" id="MF_00392">
    <property type="entry name" value="LpxB"/>
    <property type="match status" value="1"/>
</dbReference>
<dbReference type="InterPro" id="IPR003835">
    <property type="entry name" value="Glyco_trans_19"/>
</dbReference>
<dbReference type="NCBIfam" id="TIGR00215">
    <property type="entry name" value="lpxB"/>
    <property type="match status" value="1"/>
</dbReference>
<dbReference type="PANTHER" id="PTHR30372">
    <property type="entry name" value="LIPID-A-DISACCHARIDE SYNTHASE"/>
    <property type="match status" value="1"/>
</dbReference>
<dbReference type="PANTHER" id="PTHR30372:SF4">
    <property type="entry name" value="LIPID-A-DISACCHARIDE SYNTHASE, MITOCHONDRIAL-RELATED"/>
    <property type="match status" value="1"/>
</dbReference>
<dbReference type="Pfam" id="PF02684">
    <property type="entry name" value="LpxB"/>
    <property type="match status" value="1"/>
</dbReference>
<dbReference type="SUPFAM" id="SSF53756">
    <property type="entry name" value="UDP-Glycosyltransferase/glycogen phosphorylase"/>
    <property type="match status" value="1"/>
</dbReference>
<gene>
    <name evidence="1" type="primary">lpxB</name>
    <name type="ordered locus">IL0832</name>
</gene>
<comment type="function">
    <text evidence="1">Condensation of UDP-2,3-diacylglucosamine and 2,3-diacylglucosamine-1-phosphate to form lipid A disaccharide, a precursor of lipid A, a phosphorylated glycolipid that anchors the lipopolysaccharide to the outer membrane of the cell.</text>
</comment>
<comment type="catalytic activity">
    <reaction evidence="1">
        <text>a lipid X + a UDP-2-N,3-O-bis[(3R)-3-hydroxyacyl]-alpha-D-glucosamine = a lipid A disaccharide + UDP + H(+)</text>
        <dbReference type="Rhea" id="RHEA:67828"/>
        <dbReference type="ChEBI" id="CHEBI:15378"/>
        <dbReference type="ChEBI" id="CHEBI:58223"/>
        <dbReference type="ChEBI" id="CHEBI:137748"/>
        <dbReference type="ChEBI" id="CHEBI:176338"/>
        <dbReference type="ChEBI" id="CHEBI:176343"/>
        <dbReference type="EC" id="2.4.1.182"/>
    </reaction>
</comment>
<comment type="pathway">
    <text evidence="1">Bacterial outer membrane biogenesis; LPS lipid A biosynthesis.</text>
</comment>
<comment type="similarity">
    <text evidence="1">Belongs to the LpxB family.</text>
</comment>
<feature type="chain" id="PRO_0000255189" description="Lipid-A-disaccharide synthase">
    <location>
        <begin position="1"/>
        <end position="379"/>
    </location>
</feature>
<accession>Q5QYW1</accession>
<keyword id="KW-0328">Glycosyltransferase</keyword>
<keyword id="KW-0441">Lipid A biosynthesis</keyword>
<keyword id="KW-0444">Lipid biosynthesis</keyword>
<keyword id="KW-0443">Lipid metabolism</keyword>
<keyword id="KW-1185">Reference proteome</keyword>
<keyword id="KW-0808">Transferase</keyword>
<evidence type="ECO:0000255" key="1">
    <source>
        <dbReference type="HAMAP-Rule" id="MF_00392"/>
    </source>
</evidence>
<sequence length="379" mass="42324">MSRNQPPKIAIVAGEHSGDLLGAGLMQAIAKRHPNATFIGVGGPLMAERGMDSFFAMDDLAVMGIAEVFQQLPKLLKHRKNLVNYLISEQPDVMIGIDAPDFNLTVEARLKKAGISTIHYVSPSVWAWREGRIKGIKKAVDHVLCLLPFEKDFYDKHQLPATFVGHPLADDIPMQWQQTEARNELELEPAVMYLAILPGSRKGEIARMAPVFLKVANKLAERYPELRFVAPMISEARAAQFRELVDQYSPELNIVLPVGESRKVMAAANYLLLTSGTVALEALLIKRPMVVAYRFHWLSYQIIKRLFHAPFFSLPNLLAGKEIVPELAQSDASEEAIEQALVQLIEQDNEPLLEQFTNIHQQLQVSASEKAADVVESFL</sequence>